<name>EXLA2_ARATH</name>
<keyword id="KW-0325">Glycoprotein</keyword>
<keyword id="KW-1185">Reference proteome</keyword>
<keyword id="KW-0964">Secreted</keyword>
<keyword id="KW-0732">Signal</keyword>
<gene>
    <name type="primary">EXLA2</name>
    <name type="synonym">EXPL2</name>
    <name type="ordered locus">At4g38400</name>
    <name type="ORF">F22I13.170</name>
</gene>
<sequence>MLQGFLFLLSVVLLFSSSAAACDRCLHSSKAAYFSSASALSSGACAYGSMATGFFAGHIAAALPSIYKDGSGCGACFQVRCKNPTLCSSKGTTVIVTDLNKTNQTDLVLSSRAFRAMAKPVVGADRDLLKQGIVDIEYRRVPCDYGNKKMNVRVEESSKNPNYLAIKLLYQGGQTEVVAIYIAQVGSSHWSYMTRSHGAVWVTDKVPNGALQFRFVVTAGYDGKMVWSQRVLPANWEAGKSYDAGVQITDIAQEGCDPCDDHIWN</sequence>
<organism>
    <name type="scientific">Arabidopsis thaliana</name>
    <name type="common">Mouse-ear cress</name>
    <dbReference type="NCBI Taxonomy" id="3702"/>
    <lineage>
        <taxon>Eukaryota</taxon>
        <taxon>Viridiplantae</taxon>
        <taxon>Streptophyta</taxon>
        <taxon>Embryophyta</taxon>
        <taxon>Tracheophyta</taxon>
        <taxon>Spermatophyta</taxon>
        <taxon>Magnoliopsida</taxon>
        <taxon>eudicotyledons</taxon>
        <taxon>Gunneridae</taxon>
        <taxon>Pentapetalae</taxon>
        <taxon>rosids</taxon>
        <taxon>malvids</taxon>
        <taxon>Brassicales</taxon>
        <taxon>Brassicaceae</taxon>
        <taxon>Camelineae</taxon>
        <taxon>Arabidopsis</taxon>
    </lineage>
</organism>
<protein>
    <recommendedName>
        <fullName>Expansin-like A2</fullName>
        <shortName>At-EXPL2</shortName>
        <shortName>AtEXLA2</shortName>
        <shortName>AtEXPL2</shortName>
    </recommendedName>
    <alternativeName>
        <fullName>Ath-ExpBeta-2.2</fullName>
    </alternativeName>
</protein>
<comment type="subcellular location">
    <subcellularLocation>
        <location evidence="4">Secreted</location>
    </subcellularLocation>
</comment>
<comment type="similarity">
    <text evidence="4">Belongs to the expansin family. Expansin-like A subfamily.</text>
</comment>
<comment type="online information" name="EXPANSIN homepage">
    <link uri="https://www.dept.psu.edu/biology/groups/expansins/index.htm"/>
</comment>
<accession>Q9SVE5</accession>
<feature type="signal peptide" evidence="1">
    <location>
        <begin position="1"/>
        <end position="21"/>
    </location>
</feature>
<feature type="chain" id="PRO_0000008713" description="Expansin-like A2">
    <location>
        <begin position="22"/>
        <end position="265"/>
    </location>
</feature>
<feature type="domain" description="Expansin-like EG45" evidence="3">
    <location>
        <begin position="42"/>
        <end position="148"/>
    </location>
</feature>
<feature type="domain" description="Expansin-like CBD" evidence="2">
    <location>
        <begin position="162"/>
        <end position="244"/>
    </location>
</feature>
<feature type="glycosylation site" description="N-linked (GlcNAc...) asparagine" evidence="1">
    <location>
        <position position="100"/>
    </location>
</feature>
<feature type="glycosylation site" description="N-linked (GlcNAc...) asparagine" evidence="1">
    <location>
        <position position="103"/>
    </location>
</feature>
<evidence type="ECO:0000255" key="1"/>
<evidence type="ECO:0000255" key="2">
    <source>
        <dbReference type="PROSITE-ProRule" id="PRU00078"/>
    </source>
</evidence>
<evidence type="ECO:0000255" key="3">
    <source>
        <dbReference type="PROSITE-ProRule" id="PRU00079"/>
    </source>
</evidence>
<evidence type="ECO:0000305" key="4"/>
<dbReference type="EMBL" id="AL035539">
    <property type="protein sequence ID" value="CAB37496.1"/>
    <property type="molecule type" value="Genomic_DNA"/>
</dbReference>
<dbReference type="EMBL" id="AL161593">
    <property type="protein sequence ID" value="CAB80505.1"/>
    <property type="molecule type" value="Genomic_DNA"/>
</dbReference>
<dbReference type="EMBL" id="CP002687">
    <property type="protein sequence ID" value="AEE86923.1"/>
    <property type="molecule type" value="Genomic_DNA"/>
</dbReference>
<dbReference type="EMBL" id="AY050470">
    <property type="protein sequence ID" value="AAK91483.1"/>
    <property type="molecule type" value="mRNA"/>
</dbReference>
<dbReference type="EMBL" id="AF378855">
    <property type="protein sequence ID" value="AAK55658.1"/>
    <property type="molecule type" value="mRNA"/>
</dbReference>
<dbReference type="PIR" id="T05668">
    <property type="entry name" value="T05668"/>
</dbReference>
<dbReference type="RefSeq" id="NP_195553.1">
    <property type="nucleotide sequence ID" value="NM_120002.4"/>
</dbReference>
<dbReference type="SMR" id="Q9SVE5"/>
<dbReference type="FunCoup" id="Q9SVE5">
    <property type="interactions" value="10"/>
</dbReference>
<dbReference type="STRING" id="3702.Q9SVE5"/>
<dbReference type="GlyCosmos" id="Q9SVE5">
    <property type="glycosylation" value="2 sites, No reported glycans"/>
</dbReference>
<dbReference type="GlyGen" id="Q9SVE5">
    <property type="glycosylation" value="2 sites"/>
</dbReference>
<dbReference type="PaxDb" id="3702-AT4G38400.1"/>
<dbReference type="ProteomicsDB" id="222332"/>
<dbReference type="EnsemblPlants" id="AT4G38400.1">
    <property type="protein sequence ID" value="AT4G38400.1"/>
    <property type="gene ID" value="AT4G38400"/>
</dbReference>
<dbReference type="GeneID" id="829997"/>
<dbReference type="Gramene" id="AT4G38400.1">
    <property type="protein sequence ID" value="AT4G38400.1"/>
    <property type="gene ID" value="AT4G38400"/>
</dbReference>
<dbReference type="KEGG" id="ath:AT4G38400"/>
<dbReference type="Araport" id="AT4G38400"/>
<dbReference type="TAIR" id="AT4G38400">
    <property type="gene designation" value="EXLA2"/>
</dbReference>
<dbReference type="eggNOG" id="ENOG502QSGZ">
    <property type="taxonomic scope" value="Eukaryota"/>
</dbReference>
<dbReference type="HOGENOM" id="CLU_027462_3_1_1"/>
<dbReference type="InParanoid" id="Q9SVE5"/>
<dbReference type="OMA" id="IRCKNTT"/>
<dbReference type="OrthoDB" id="623266at2759"/>
<dbReference type="PhylomeDB" id="Q9SVE5"/>
<dbReference type="CD-CODE" id="4299E36E">
    <property type="entry name" value="Nucleolus"/>
</dbReference>
<dbReference type="PRO" id="PR:Q9SVE5"/>
<dbReference type="Proteomes" id="UP000006548">
    <property type="component" value="Chromosome 4"/>
</dbReference>
<dbReference type="ExpressionAtlas" id="Q9SVE5">
    <property type="expression patterns" value="baseline and differential"/>
</dbReference>
<dbReference type="GO" id="GO:0005576">
    <property type="term" value="C:extracellular region"/>
    <property type="evidence" value="ECO:0007669"/>
    <property type="project" value="UniProtKB-SubCell"/>
</dbReference>
<dbReference type="GO" id="GO:0009653">
    <property type="term" value="P:anatomical structure morphogenesis"/>
    <property type="evidence" value="ECO:0007669"/>
    <property type="project" value="UniProtKB-ARBA"/>
</dbReference>
<dbReference type="GO" id="GO:0009828">
    <property type="term" value="P:plant-type cell wall loosening"/>
    <property type="evidence" value="ECO:0000250"/>
    <property type="project" value="UniProtKB"/>
</dbReference>
<dbReference type="GO" id="GO:0019953">
    <property type="term" value="P:sexual reproduction"/>
    <property type="evidence" value="ECO:0007669"/>
    <property type="project" value="InterPro"/>
</dbReference>
<dbReference type="CDD" id="cd22276">
    <property type="entry name" value="DPBB_EXLA_N"/>
    <property type="match status" value="1"/>
</dbReference>
<dbReference type="FunFam" id="2.40.40.10:FF:000006">
    <property type="entry name" value="Expansin-like A2"/>
    <property type="match status" value="1"/>
</dbReference>
<dbReference type="FunFam" id="2.60.40.760:FF:000003">
    <property type="entry name" value="Expansin-like A2"/>
    <property type="match status" value="1"/>
</dbReference>
<dbReference type="Gene3D" id="2.60.40.760">
    <property type="entry name" value="Expansin, cellulose-binding-like domain"/>
    <property type="match status" value="1"/>
</dbReference>
<dbReference type="Gene3D" id="2.40.40.10">
    <property type="entry name" value="RlpA-like domain"/>
    <property type="match status" value="1"/>
</dbReference>
<dbReference type="InterPro" id="IPR007118">
    <property type="entry name" value="Expan_Lol_pI"/>
</dbReference>
<dbReference type="InterPro" id="IPR007112">
    <property type="entry name" value="Expansin/allergen_DPBB_dom"/>
</dbReference>
<dbReference type="InterPro" id="IPR007117">
    <property type="entry name" value="Expansin_CBD"/>
</dbReference>
<dbReference type="InterPro" id="IPR036749">
    <property type="entry name" value="Expansin_CBD_sf"/>
</dbReference>
<dbReference type="InterPro" id="IPR005795">
    <property type="entry name" value="LolPI"/>
</dbReference>
<dbReference type="InterPro" id="IPR009009">
    <property type="entry name" value="RlpA-like_DPBB"/>
</dbReference>
<dbReference type="InterPro" id="IPR036908">
    <property type="entry name" value="RlpA-like_sf"/>
</dbReference>
<dbReference type="PANTHER" id="PTHR31692">
    <property type="entry name" value="EXPANSIN-B3"/>
    <property type="match status" value="1"/>
</dbReference>
<dbReference type="PANTHER" id="PTHR31692:SF4">
    <property type="entry name" value="EXPANSIN-LIKE A1-RELATED"/>
    <property type="match status" value="1"/>
</dbReference>
<dbReference type="Pfam" id="PF03330">
    <property type="entry name" value="DPBB_1"/>
    <property type="match status" value="1"/>
</dbReference>
<dbReference type="Pfam" id="PF01357">
    <property type="entry name" value="Expansin_C"/>
    <property type="match status" value="1"/>
</dbReference>
<dbReference type="PRINTS" id="PR01225">
    <property type="entry name" value="EXPANSNFAMLY"/>
</dbReference>
<dbReference type="PRINTS" id="PR00829">
    <property type="entry name" value="LOLP1ALLERGN"/>
</dbReference>
<dbReference type="SUPFAM" id="SSF50685">
    <property type="entry name" value="Barwin-like endoglucanases"/>
    <property type="match status" value="1"/>
</dbReference>
<dbReference type="SUPFAM" id="SSF49590">
    <property type="entry name" value="PHL pollen allergen"/>
    <property type="match status" value="1"/>
</dbReference>
<dbReference type="PROSITE" id="PS50843">
    <property type="entry name" value="EXPANSIN_CBD"/>
    <property type="match status" value="1"/>
</dbReference>
<dbReference type="PROSITE" id="PS50842">
    <property type="entry name" value="EXPANSIN_EG45"/>
    <property type="match status" value="1"/>
</dbReference>
<reference key="1">
    <citation type="journal article" date="1999" name="Nature">
        <title>Sequence and analysis of chromosome 4 of the plant Arabidopsis thaliana.</title>
        <authorList>
            <person name="Mayer K.F.X."/>
            <person name="Schueller C."/>
            <person name="Wambutt R."/>
            <person name="Murphy G."/>
            <person name="Volckaert G."/>
            <person name="Pohl T."/>
            <person name="Duesterhoeft A."/>
            <person name="Stiekema W."/>
            <person name="Entian K.-D."/>
            <person name="Terryn N."/>
            <person name="Harris B."/>
            <person name="Ansorge W."/>
            <person name="Brandt P."/>
            <person name="Grivell L.A."/>
            <person name="Rieger M."/>
            <person name="Weichselgartner M."/>
            <person name="de Simone V."/>
            <person name="Obermaier B."/>
            <person name="Mache R."/>
            <person name="Mueller M."/>
            <person name="Kreis M."/>
            <person name="Delseny M."/>
            <person name="Puigdomenech P."/>
            <person name="Watson M."/>
            <person name="Schmidtheini T."/>
            <person name="Reichert B."/>
            <person name="Portetelle D."/>
            <person name="Perez-Alonso M."/>
            <person name="Boutry M."/>
            <person name="Bancroft I."/>
            <person name="Vos P."/>
            <person name="Hoheisel J."/>
            <person name="Zimmermann W."/>
            <person name="Wedler H."/>
            <person name="Ridley P."/>
            <person name="Langham S.-A."/>
            <person name="McCullagh B."/>
            <person name="Bilham L."/>
            <person name="Robben J."/>
            <person name="van der Schueren J."/>
            <person name="Grymonprez B."/>
            <person name="Chuang Y.-J."/>
            <person name="Vandenbussche F."/>
            <person name="Braeken M."/>
            <person name="Weltjens I."/>
            <person name="Voet M."/>
            <person name="Bastiaens I."/>
            <person name="Aert R."/>
            <person name="Defoor E."/>
            <person name="Weitzenegger T."/>
            <person name="Bothe G."/>
            <person name="Ramsperger U."/>
            <person name="Hilbert H."/>
            <person name="Braun M."/>
            <person name="Holzer E."/>
            <person name="Brandt A."/>
            <person name="Peters S."/>
            <person name="van Staveren M."/>
            <person name="Dirkse W."/>
            <person name="Mooijman P."/>
            <person name="Klein Lankhorst R."/>
            <person name="Rose M."/>
            <person name="Hauf J."/>
            <person name="Koetter P."/>
            <person name="Berneiser S."/>
            <person name="Hempel S."/>
            <person name="Feldpausch M."/>
            <person name="Lamberth S."/>
            <person name="Van den Daele H."/>
            <person name="De Keyser A."/>
            <person name="Buysshaert C."/>
            <person name="Gielen J."/>
            <person name="Villarroel R."/>
            <person name="De Clercq R."/>
            <person name="van Montagu M."/>
            <person name="Rogers J."/>
            <person name="Cronin A."/>
            <person name="Quail M.A."/>
            <person name="Bray-Allen S."/>
            <person name="Clark L."/>
            <person name="Doggett J."/>
            <person name="Hall S."/>
            <person name="Kay M."/>
            <person name="Lennard N."/>
            <person name="McLay K."/>
            <person name="Mayes R."/>
            <person name="Pettett A."/>
            <person name="Rajandream M.A."/>
            <person name="Lyne M."/>
            <person name="Benes V."/>
            <person name="Rechmann S."/>
            <person name="Borkova D."/>
            <person name="Bloecker H."/>
            <person name="Scharfe M."/>
            <person name="Grimm M."/>
            <person name="Loehnert T.-H."/>
            <person name="Dose S."/>
            <person name="de Haan M."/>
            <person name="Maarse A.C."/>
            <person name="Schaefer M."/>
            <person name="Mueller-Auer S."/>
            <person name="Gabel C."/>
            <person name="Fuchs M."/>
            <person name="Fartmann B."/>
            <person name="Granderath K."/>
            <person name="Dauner D."/>
            <person name="Herzl A."/>
            <person name="Neumann S."/>
            <person name="Argiriou A."/>
            <person name="Vitale D."/>
            <person name="Liguori R."/>
            <person name="Piravandi E."/>
            <person name="Massenet O."/>
            <person name="Quigley F."/>
            <person name="Clabauld G."/>
            <person name="Muendlein A."/>
            <person name="Felber R."/>
            <person name="Schnabl S."/>
            <person name="Hiller R."/>
            <person name="Schmidt W."/>
            <person name="Lecharny A."/>
            <person name="Aubourg S."/>
            <person name="Chefdor F."/>
            <person name="Cooke R."/>
            <person name="Berger C."/>
            <person name="Monfort A."/>
            <person name="Casacuberta E."/>
            <person name="Gibbons T."/>
            <person name="Weber N."/>
            <person name="Vandenbol M."/>
            <person name="Bargues M."/>
            <person name="Terol J."/>
            <person name="Torres A."/>
            <person name="Perez-Perez A."/>
            <person name="Purnelle B."/>
            <person name="Bent E."/>
            <person name="Johnson S."/>
            <person name="Tacon D."/>
            <person name="Jesse T."/>
            <person name="Heijnen L."/>
            <person name="Schwarz S."/>
            <person name="Scholler P."/>
            <person name="Heber S."/>
            <person name="Francs P."/>
            <person name="Bielke C."/>
            <person name="Frishman D."/>
            <person name="Haase D."/>
            <person name="Lemcke K."/>
            <person name="Mewes H.-W."/>
            <person name="Stocker S."/>
            <person name="Zaccaria P."/>
            <person name="Bevan M."/>
            <person name="Wilson R.K."/>
            <person name="de la Bastide M."/>
            <person name="Habermann K."/>
            <person name="Parnell L."/>
            <person name="Dedhia N."/>
            <person name="Gnoj L."/>
            <person name="Schutz K."/>
            <person name="Huang E."/>
            <person name="Spiegel L."/>
            <person name="Sekhon M."/>
            <person name="Murray J."/>
            <person name="Sheet P."/>
            <person name="Cordes M."/>
            <person name="Abu-Threideh J."/>
            <person name="Stoneking T."/>
            <person name="Kalicki J."/>
            <person name="Graves T."/>
            <person name="Harmon G."/>
            <person name="Edwards J."/>
            <person name="Latreille P."/>
            <person name="Courtney L."/>
            <person name="Cloud J."/>
            <person name="Abbott A."/>
            <person name="Scott K."/>
            <person name="Johnson D."/>
            <person name="Minx P."/>
            <person name="Bentley D."/>
            <person name="Fulton B."/>
            <person name="Miller N."/>
            <person name="Greco T."/>
            <person name="Kemp K."/>
            <person name="Kramer J."/>
            <person name="Fulton L."/>
            <person name="Mardis E."/>
            <person name="Dante M."/>
            <person name="Pepin K."/>
            <person name="Hillier L.W."/>
            <person name="Nelson J."/>
            <person name="Spieth J."/>
            <person name="Ryan E."/>
            <person name="Andrews S."/>
            <person name="Geisel C."/>
            <person name="Layman D."/>
            <person name="Du H."/>
            <person name="Ali J."/>
            <person name="Berghoff A."/>
            <person name="Jones K."/>
            <person name="Drone K."/>
            <person name="Cotton M."/>
            <person name="Joshu C."/>
            <person name="Antonoiu B."/>
            <person name="Zidanic M."/>
            <person name="Strong C."/>
            <person name="Sun H."/>
            <person name="Lamar B."/>
            <person name="Yordan C."/>
            <person name="Ma P."/>
            <person name="Zhong J."/>
            <person name="Preston R."/>
            <person name="Vil D."/>
            <person name="Shekher M."/>
            <person name="Matero A."/>
            <person name="Shah R."/>
            <person name="Swaby I.K."/>
            <person name="O'Shaughnessy A."/>
            <person name="Rodriguez M."/>
            <person name="Hoffman J."/>
            <person name="Till S."/>
            <person name="Granat S."/>
            <person name="Shohdy N."/>
            <person name="Hasegawa A."/>
            <person name="Hameed A."/>
            <person name="Lodhi M."/>
            <person name="Johnson A."/>
            <person name="Chen E."/>
            <person name="Marra M.A."/>
            <person name="Martienssen R."/>
            <person name="McCombie W.R."/>
        </authorList>
    </citation>
    <scope>NUCLEOTIDE SEQUENCE [LARGE SCALE GENOMIC DNA]</scope>
    <source>
        <strain>cv. Columbia</strain>
    </source>
</reference>
<reference key="2">
    <citation type="journal article" date="2017" name="Plant J.">
        <title>Araport11: a complete reannotation of the Arabidopsis thaliana reference genome.</title>
        <authorList>
            <person name="Cheng C.Y."/>
            <person name="Krishnakumar V."/>
            <person name="Chan A.P."/>
            <person name="Thibaud-Nissen F."/>
            <person name="Schobel S."/>
            <person name="Town C.D."/>
        </authorList>
    </citation>
    <scope>GENOME REANNOTATION</scope>
    <source>
        <strain>cv. Columbia</strain>
    </source>
</reference>
<reference key="3">
    <citation type="journal article" date="2003" name="Science">
        <title>Empirical analysis of transcriptional activity in the Arabidopsis genome.</title>
        <authorList>
            <person name="Yamada K."/>
            <person name="Lim J."/>
            <person name="Dale J.M."/>
            <person name="Chen H."/>
            <person name="Shinn P."/>
            <person name="Palm C.J."/>
            <person name="Southwick A.M."/>
            <person name="Wu H.C."/>
            <person name="Kim C.J."/>
            <person name="Nguyen M."/>
            <person name="Pham P.K."/>
            <person name="Cheuk R.F."/>
            <person name="Karlin-Newmann G."/>
            <person name="Liu S.X."/>
            <person name="Lam B."/>
            <person name="Sakano H."/>
            <person name="Wu T."/>
            <person name="Yu G."/>
            <person name="Miranda M."/>
            <person name="Quach H.L."/>
            <person name="Tripp M."/>
            <person name="Chang C.H."/>
            <person name="Lee J.M."/>
            <person name="Toriumi M.J."/>
            <person name="Chan M.M."/>
            <person name="Tang C.C."/>
            <person name="Onodera C.S."/>
            <person name="Deng J.M."/>
            <person name="Akiyama K."/>
            <person name="Ansari Y."/>
            <person name="Arakawa T."/>
            <person name="Banh J."/>
            <person name="Banno F."/>
            <person name="Bowser L."/>
            <person name="Brooks S.Y."/>
            <person name="Carninci P."/>
            <person name="Chao Q."/>
            <person name="Choy N."/>
            <person name="Enju A."/>
            <person name="Goldsmith A.D."/>
            <person name="Gurjal M."/>
            <person name="Hansen N.F."/>
            <person name="Hayashizaki Y."/>
            <person name="Johnson-Hopson C."/>
            <person name="Hsuan V.W."/>
            <person name="Iida K."/>
            <person name="Karnes M."/>
            <person name="Khan S."/>
            <person name="Koesema E."/>
            <person name="Ishida J."/>
            <person name="Jiang P.X."/>
            <person name="Jones T."/>
            <person name="Kawai J."/>
            <person name="Kamiya A."/>
            <person name="Meyers C."/>
            <person name="Nakajima M."/>
            <person name="Narusaka M."/>
            <person name="Seki M."/>
            <person name="Sakurai T."/>
            <person name="Satou M."/>
            <person name="Tamse R."/>
            <person name="Vaysberg M."/>
            <person name="Wallender E.K."/>
            <person name="Wong C."/>
            <person name="Yamamura Y."/>
            <person name="Yuan S."/>
            <person name="Shinozaki K."/>
            <person name="Davis R.W."/>
            <person name="Theologis A."/>
            <person name="Ecker J.R."/>
        </authorList>
    </citation>
    <scope>NUCLEOTIDE SEQUENCE [LARGE SCALE MRNA]</scope>
    <source>
        <strain>cv. Columbia</strain>
    </source>
</reference>
<reference key="4">
    <citation type="journal article" date="2004" name="Plant Mol. Biol.">
        <title>Nomenclature for members of the expansin superfamily of genes and proteins.</title>
        <authorList>
            <person name="Kende H."/>
            <person name="Bradford K.J."/>
            <person name="Brummell D.A."/>
            <person name="Cho H.-T."/>
            <person name="Cosgrove D.J."/>
            <person name="Fleming A.J."/>
            <person name="Gehring C."/>
            <person name="Lee Y."/>
            <person name="McQueen-Mason S.J."/>
            <person name="Rose J.K.C."/>
            <person name="Voesenek L.A.C."/>
        </authorList>
    </citation>
    <scope>NOMENCLATURE</scope>
</reference>
<proteinExistence type="evidence at transcript level"/>